<feature type="chain" id="PRO_0000121910" description="tRNA pseudouridine synthase B">
    <location>
        <begin position="1"/>
        <end position="294"/>
    </location>
</feature>
<feature type="active site" description="Nucleophile" evidence="1">
    <location>
        <position position="39"/>
    </location>
</feature>
<keyword id="KW-0413">Isomerase</keyword>
<keyword id="KW-0819">tRNA processing</keyword>
<organism>
    <name type="scientific">Streptococcus agalactiae serotype III (strain NEM316)</name>
    <dbReference type="NCBI Taxonomy" id="211110"/>
    <lineage>
        <taxon>Bacteria</taxon>
        <taxon>Bacillati</taxon>
        <taxon>Bacillota</taxon>
        <taxon>Bacilli</taxon>
        <taxon>Lactobacillales</taxon>
        <taxon>Streptococcaceae</taxon>
        <taxon>Streptococcus</taxon>
    </lineage>
</organism>
<evidence type="ECO:0000255" key="1">
    <source>
        <dbReference type="HAMAP-Rule" id="MF_01080"/>
    </source>
</evidence>
<reference key="1">
    <citation type="journal article" date="2002" name="Mol. Microbiol.">
        <title>Genome sequence of Streptococcus agalactiae, a pathogen causing invasive neonatal disease.</title>
        <authorList>
            <person name="Glaser P."/>
            <person name="Rusniok C."/>
            <person name="Buchrieser C."/>
            <person name="Chevalier F."/>
            <person name="Frangeul L."/>
            <person name="Msadek T."/>
            <person name="Zouine M."/>
            <person name="Couve E."/>
            <person name="Lalioui L."/>
            <person name="Poyart C."/>
            <person name="Trieu-Cuot P."/>
            <person name="Kunst F."/>
        </authorList>
    </citation>
    <scope>NUCLEOTIDE SEQUENCE [LARGE SCALE GENOMIC DNA]</scope>
    <source>
        <strain>NEM316</strain>
    </source>
</reference>
<protein>
    <recommendedName>
        <fullName evidence="1">tRNA pseudouridine synthase B</fullName>
        <ecNumber evidence="1">5.4.99.25</ecNumber>
    </recommendedName>
    <alternativeName>
        <fullName evidence="1">tRNA pseudouridine(55) synthase</fullName>
        <shortName evidence="1">Psi55 synthase</shortName>
    </alternativeName>
    <alternativeName>
        <fullName evidence="1">tRNA pseudouridylate synthase</fullName>
    </alternativeName>
    <alternativeName>
        <fullName evidence="1">tRNA-uridine isomerase</fullName>
    </alternativeName>
</protein>
<sequence length="294" mass="32907">MITGIINLKKEAGMTSHDAVFKLRKILHTKKIGHGGTLDPDVVGVLPIAVGKATRVIEYMTESGKIYEGEITLGYATSTEDSSGEVISRTPLTQSDLSEDVVDHAMKSFTGPITQVPPMYSAVKVNGKKLYEYARSGEEVERPKRQITISEFRRTSPLYFEKGICRFSFYVSCSKGTYVRTLAVDLGIKLGYASHMSFLKRTSSAGLSITQSLTLEEINEKYKQEDFSFLLPIEYGVLDLPKVNLTEEDKVEISYGRRILLENEADTLAAFYENRVIAILEKRGNEFKPHKVLL</sequence>
<dbReference type="EC" id="5.4.99.25" evidence="1"/>
<dbReference type="EMBL" id="AL766848">
    <property type="protein sequence ID" value="CAD46692.1"/>
    <property type="molecule type" value="Genomic_DNA"/>
</dbReference>
<dbReference type="RefSeq" id="WP_001873502.1">
    <property type="nucleotide sequence ID" value="NC_004368.1"/>
</dbReference>
<dbReference type="SMR" id="P65856"/>
<dbReference type="GeneID" id="66885938"/>
<dbReference type="KEGG" id="san:truB"/>
<dbReference type="eggNOG" id="COG0130">
    <property type="taxonomic scope" value="Bacteria"/>
</dbReference>
<dbReference type="HOGENOM" id="CLU_032087_0_1_9"/>
<dbReference type="Proteomes" id="UP000000823">
    <property type="component" value="Chromosome"/>
</dbReference>
<dbReference type="GO" id="GO:0003723">
    <property type="term" value="F:RNA binding"/>
    <property type="evidence" value="ECO:0007669"/>
    <property type="project" value="InterPro"/>
</dbReference>
<dbReference type="GO" id="GO:0160148">
    <property type="term" value="F:tRNA pseudouridine(55) synthase activity"/>
    <property type="evidence" value="ECO:0007669"/>
    <property type="project" value="UniProtKB-EC"/>
</dbReference>
<dbReference type="GO" id="GO:1990481">
    <property type="term" value="P:mRNA pseudouridine synthesis"/>
    <property type="evidence" value="ECO:0007669"/>
    <property type="project" value="TreeGrafter"/>
</dbReference>
<dbReference type="GO" id="GO:0031119">
    <property type="term" value="P:tRNA pseudouridine synthesis"/>
    <property type="evidence" value="ECO:0007669"/>
    <property type="project" value="UniProtKB-UniRule"/>
</dbReference>
<dbReference type="CDD" id="cd02573">
    <property type="entry name" value="PseudoU_synth_EcTruB"/>
    <property type="match status" value="1"/>
</dbReference>
<dbReference type="FunFam" id="3.30.2350.10:FF:000011">
    <property type="entry name" value="tRNA pseudouridine synthase B"/>
    <property type="match status" value="1"/>
</dbReference>
<dbReference type="Gene3D" id="3.30.2350.10">
    <property type="entry name" value="Pseudouridine synthase"/>
    <property type="match status" value="1"/>
</dbReference>
<dbReference type="HAMAP" id="MF_01080">
    <property type="entry name" value="TruB_bact"/>
    <property type="match status" value="1"/>
</dbReference>
<dbReference type="InterPro" id="IPR020103">
    <property type="entry name" value="PsdUridine_synth_cat_dom_sf"/>
</dbReference>
<dbReference type="InterPro" id="IPR002501">
    <property type="entry name" value="PsdUridine_synth_N"/>
</dbReference>
<dbReference type="InterPro" id="IPR014780">
    <property type="entry name" value="tRNA_psdUridine_synth_TruB"/>
</dbReference>
<dbReference type="InterPro" id="IPR032819">
    <property type="entry name" value="TruB_C"/>
</dbReference>
<dbReference type="NCBIfam" id="TIGR00431">
    <property type="entry name" value="TruB"/>
    <property type="match status" value="1"/>
</dbReference>
<dbReference type="PANTHER" id="PTHR13767:SF2">
    <property type="entry name" value="PSEUDOURIDYLATE SYNTHASE TRUB1"/>
    <property type="match status" value="1"/>
</dbReference>
<dbReference type="PANTHER" id="PTHR13767">
    <property type="entry name" value="TRNA-PSEUDOURIDINE SYNTHASE"/>
    <property type="match status" value="1"/>
</dbReference>
<dbReference type="Pfam" id="PF16198">
    <property type="entry name" value="TruB_C_2"/>
    <property type="match status" value="1"/>
</dbReference>
<dbReference type="Pfam" id="PF01509">
    <property type="entry name" value="TruB_N"/>
    <property type="match status" value="1"/>
</dbReference>
<dbReference type="SUPFAM" id="SSF55120">
    <property type="entry name" value="Pseudouridine synthase"/>
    <property type="match status" value="1"/>
</dbReference>
<proteinExistence type="inferred from homology"/>
<name>TRUB_STRA3</name>
<accession>P65856</accession>
<accession>Q8CX11</accession>
<accession>Q8E5J6</accession>
<comment type="function">
    <text evidence="1">Responsible for synthesis of pseudouridine from uracil-55 in the psi GC loop of transfer RNAs.</text>
</comment>
<comment type="catalytic activity">
    <reaction evidence="1">
        <text>uridine(55) in tRNA = pseudouridine(55) in tRNA</text>
        <dbReference type="Rhea" id="RHEA:42532"/>
        <dbReference type="Rhea" id="RHEA-COMP:10101"/>
        <dbReference type="Rhea" id="RHEA-COMP:10102"/>
        <dbReference type="ChEBI" id="CHEBI:65314"/>
        <dbReference type="ChEBI" id="CHEBI:65315"/>
        <dbReference type="EC" id="5.4.99.25"/>
    </reaction>
</comment>
<comment type="similarity">
    <text evidence="1">Belongs to the pseudouridine synthase TruB family. Type 1 subfamily.</text>
</comment>
<gene>
    <name evidence="1" type="primary">truB</name>
    <name type="ordered locus">gbs1033</name>
</gene>